<evidence type="ECO:0000255" key="1">
    <source>
        <dbReference type="HAMAP-Rule" id="MF_00008"/>
    </source>
</evidence>
<proteinExistence type="inferred from homology"/>
<feature type="chain" id="PRO_1000000596" description="Thymidylate synthase">
    <location>
        <begin position="1"/>
        <end position="274"/>
    </location>
</feature>
<feature type="active site" description="Nucleophile" evidence="1">
    <location>
        <position position="156"/>
    </location>
</feature>
<feature type="binding site" description="in other chain" evidence="1">
    <location>
        <position position="21"/>
    </location>
    <ligand>
        <name>dUMP</name>
        <dbReference type="ChEBI" id="CHEBI:246422"/>
        <note>ligand shared between dimeric partners</note>
    </ligand>
</feature>
<feature type="binding site" evidence="1">
    <location>
        <position position="51"/>
    </location>
    <ligand>
        <name>(6R)-5,10-methylene-5,6,7,8-tetrahydrofolate</name>
        <dbReference type="ChEBI" id="CHEBI:15636"/>
    </ligand>
</feature>
<feature type="binding site" evidence="1">
    <location>
        <begin position="123"/>
        <end position="124"/>
    </location>
    <ligand>
        <name>dUMP</name>
        <dbReference type="ChEBI" id="CHEBI:246422"/>
        <note>ligand shared between dimeric partners</note>
    </ligand>
</feature>
<feature type="binding site" description="in other chain" evidence="1">
    <location>
        <begin position="176"/>
        <end position="179"/>
    </location>
    <ligand>
        <name>dUMP</name>
        <dbReference type="ChEBI" id="CHEBI:246422"/>
        <note>ligand shared between dimeric partners</note>
    </ligand>
</feature>
<feature type="binding site" evidence="1">
    <location>
        <position position="179"/>
    </location>
    <ligand>
        <name>(6R)-5,10-methylene-5,6,7,8-tetrahydrofolate</name>
        <dbReference type="ChEBI" id="CHEBI:15636"/>
    </ligand>
</feature>
<feature type="binding site" description="in other chain" evidence="1">
    <location>
        <position position="187"/>
    </location>
    <ligand>
        <name>dUMP</name>
        <dbReference type="ChEBI" id="CHEBI:246422"/>
        <note>ligand shared between dimeric partners</note>
    </ligand>
</feature>
<feature type="binding site" description="in other chain" evidence="1">
    <location>
        <begin position="217"/>
        <end position="219"/>
    </location>
    <ligand>
        <name>dUMP</name>
        <dbReference type="ChEBI" id="CHEBI:246422"/>
        <note>ligand shared between dimeric partners</note>
    </ligand>
</feature>
<feature type="binding site" evidence="1">
    <location>
        <position position="273"/>
    </location>
    <ligand>
        <name>(6R)-5,10-methylene-5,6,7,8-tetrahydrofolate</name>
        <dbReference type="ChEBI" id="CHEBI:15636"/>
    </ligand>
</feature>
<comment type="function">
    <text evidence="1">Catalyzes the reductive methylation of 2'-deoxyuridine-5'-monophosphate (dUMP) to 2'-deoxythymidine-5'-monophosphate (dTMP) while utilizing 5,10-methylenetetrahydrofolate (mTHF) as the methyl donor and reductant in the reaction, yielding dihydrofolate (DHF) as a by-product. This enzymatic reaction provides an intracellular de novo source of dTMP, an essential precursor for DNA biosynthesis.</text>
</comment>
<comment type="catalytic activity">
    <reaction evidence="1">
        <text>dUMP + (6R)-5,10-methylene-5,6,7,8-tetrahydrofolate = 7,8-dihydrofolate + dTMP</text>
        <dbReference type="Rhea" id="RHEA:12104"/>
        <dbReference type="ChEBI" id="CHEBI:15636"/>
        <dbReference type="ChEBI" id="CHEBI:57451"/>
        <dbReference type="ChEBI" id="CHEBI:63528"/>
        <dbReference type="ChEBI" id="CHEBI:246422"/>
        <dbReference type="EC" id="2.1.1.45"/>
    </reaction>
</comment>
<comment type="pathway">
    <text evidence="1">Pyrimidine metabolism; dTTP biosynthesis.</text>
</comment>
<comment type="subunit">
    <text evidence="1">Homodimer.</text>
</comment>
<comment type="subcellular location">
    <subcellularLocation>
        <location evidence="1">Cytoplasm</location>
    </subcellularLocation>
</comment>
<comment type="similarity">
    <text evidence="1">Belongs to the thymidylate synthase family. Bacterial-type ThyA subfamily.</text>
</comment>
<keyword id="KW-0963">Cytoplasm</keyword>
<keyword id="KW-0489">Methyltransferase</keyword>
<keyword id="KW-0545">Nucleotide biosynthesis</keyword>
<keyword id="KW-1185">Reference proteome</keyword>
<keyword id="KW-0808">Transferase</keyword>
<gene>
    <name evidence="1" type="primary">thyA</name>
    <name type="ordered locus">FP0333</name>
</gene>
<name>TYSY_FLAPJ</name>
<sequence>MKQYLDLVKYVLNNGTQKGDRTGTGTKSVFGYQMRFNLAEGFPMVTTKKLHLKSIIHELLWFLKGETNIAYLQQNGVKIWDDWADENGELGPVYGHQWRNWNNEEIDQITELIETLKINPNSRRMLVSAWNPSVLPDTTKSFAENVANAKVALPPCHAFFQFYVSEGKLSCQLYQRSADIFLGVPFNIASYALFTMMIAQVCDLQAGEFIHTFGDAHIYNNHFEQVALQLSREPKPLPKMILNPAVKNIFDFKFEDFKLEGYESHAHIKGAVAV</sequence>
<reference key="1">
    <citation type="journal article" date="2007" name="Nat. Biotechnol.">
        <title>Complete genome sequence of the fish pathogen Flavobacterium psychrophilum.</title>
        <authorList>
            <person name="Duchaud E."/>
            <person name="Boussaha M."/>
            <person name="Loux V."/>
            <person name="Bernardet J.-F."/>
            <person name="Michel C."/>
            <person name="Kerouault B."/>
            <person name="Mondot S."/>
            <person name="Nicolas P."/>
            <person name="Bossy R."/>
            <person name="Caron C."/>
            <person name="Bessieres P."/>
            <person name="Gibrat J.-F."/>
            <person name="Claverol S."/>
            <person name="Dumetz F."/>
            <person name="Le Henaff M."/>
            <person name="Benmansour A."/>
        </authorList>
    </citation>
    <scope>NUCLEOTIDE SEQUENCE [LARGE SCALE GENOMIC DNA]</scope>
    <source>
        <strain>ATCC 49511 / DSM 21280 / CIP 103535 / JIP02/86</strain>
    </source>
</reference>
<accession>A6GWH3</accession>
<organism>
    <name type="scientific">Flavobacterium psychrophilum (strain ATCC 49511 / DSM 21280 / CIP 103535 / JIP02/86)</name>
    <dbReference type="NCBI Taxonomy" id="402612"/>
    <lineage>
        <taxon>Bacteria</taxon>
        <taxon>Pseudomonadati</taxon>
        <taxon>Bacteroidota</taxon>
        <taxon>Flavobacteriia</taxon>
        <taxon>Flavobacteriales</taxon>
        <taxon>Flavobacteriaceae</taxon>
        <taxon>Flavobacterium</taxon>
    </lineage>
</organism>
<protein>
    <recommendedName>
        <fullName evidence="1">Thymidylate synthase</fullName>
        <shortName evidence="1">TS</shortName>
        <shortName evidence="1">TSase</shortName>
        <ecNumber evidence="1">2.1.1.45</ecNumber>
    </recommendedName>
</protein>
<dbReference type="EC" id="2.1.1.45" evidence="1"/>
<dbReference type="EMBL" id="AM398681">
    <property type="protein sequence ID" value="CAL42446.1"/>
    <property type="molecule type" value="Genomic_DNA"/>
</dbReference>
<dbReference type="RefSeq" id="WP_011962504.1">
    <property type="nucleotide sequence ID" value="NC_009613.3"/>
</dbReference>
<dbReference type="RefSeq" id="YP_001295264.1">
    <property type="nucleotide sequence ID" value="NC_009613.3"/>
</dbReference>
<dbReference type="SMR" id="A6GWH3"/>
<dbReference type="STRING" id="402612.FP0333"/>
<dbReference type="EnsemblBacteria" id="CAL42446">
    <property type="protein sequence ID" value="CAL42446"/>
    <property type="gene ID" value="FP0333"/>
</dbReference>
<dbReference type="KEGG" id="fps:FP0333"/>
<dbReference type="PATRIC" id="fig|402612.5.peg.344"/>
<dbReference type="eggNOG" id="COG0207">
    <property type="taxonomic scope" value="Bacteria"/>
</dbReference>
<dbReference type="HOGENOM" id="CLU_021669_0_0_10"/>
<dbReference type="OrthoDB" id="9774633at2"/>
<dbReference type="UniPathway" id="UPA00575"/>
<dbReference type="Proteomes" id="UP000006394">
    <property type="component" value="Chromosome"/>
</dbReference>
<dbReference type="GO" id="GO:0005829">
    <property type="term" value="C:cytosol"/>
    <property type="evidence" value="ECO:0007669"/>
    <property type="project" value="TreeGrafter"/>
</dbReference>
<dbReference type="GO" id="GO:0004799">
    <property type="term" value="F:thymidylate synthase activity"/>
    <property type="evidence" value="ECO:0007669"/>
    <property type="project" value="UniProtKB-UniRule"/>
</dbReference>
<dbReference type="GO" id="GO:0006231">
    <property type="term" value="P:dTMP biosynthetic process"/>
    <property type="evidence" value="ECO:0007669"/>
    <property type="project" value="UniProtKB-UniRule"/>
</dbReference>
<dbReference type="GO" id="GO:0006235">
    <property type="term" value="P:dTTP biosynthetic process"/>
    <property type="evidence" value="ECO:0007669"/>
    <property type="project" value="UniProtKB-UniRule"/>
</dbReference>
<dbReference type="GO" id="GO:0032259">
    <property type="term" value="P:methylation"/>
    <property type="evidence" value="ECO:0007669"/>
    <property type="project" value="UniProtKB-KW"/>
</dbReference>
<dbReference type="CDD" id="cd00351">
    <property type="entry name" value="TS_Pyrimidine_HMase"/>
    <property type="match status" value="1"/>
</dbReference>
<dbReference type="FunFam" id="3.30.572.10:FF:000013">
    <property type="entry name" value="Thymidylate synthase"/>
    <property type="match status" value="1"/>
</dbReference>
<dbReference type="Gene3D" id="3.30.572.10">
    <property type="entry name" value="Thymidylate synthase/dCMP hydroxymethylase domain"/>
    <property type="match status" value="1"/>
</dbReference>
<dbReference type="HAMAP" id="MF_00008">
    <property type="entry name" value="Thymidy_synth_bact"/>
    <property type="match status" value="1"/>
</dbReference>
<dbReference type="InterPro" id="IPR045097">
    <property type="entry name" value="Thymidate_synth/dCMP_Mease"/>
</dbReference>
<dbReference type="InterPro" id="IPR023451">
    <property type="entry name" value="Thymidate_synth/dCMP_Mease_dom"/>
</dbReference>
<dbReference type="InterPro" id="IPR036926">
    <property type="entry name" value="Thymidate_synth/dCMP_Mease_sf"/>
</dbReference>
<dbReference type="InterPro" id="IPR000398">
    <property type="entry name" value="Thymidylate_synthase"/>
</dbReference>
<dbReference type="NCBIfam" id="NF002497">
    <property type="entry name" value="PRK01827.1-3"/>
    <property type="match status" value="1"/>
</dbReference>
<dbReference type="NCBIfam" id="NF002499">
    <property type="entry name" value="PRK01827.1-5"/>
    <property type="match status" value="1"/>
</dbReference>
<dbReference type="NCBIfam" id="TIGR03284">
    <property type="entry name" value="thym_sym"/>
    <property type="match status" value="2"/>
</dbReference>
<dbReference type="PANTHER" id="PTHR11548:SF9">
    <property type="entry name" value="THYMIDYLATE SYNTHASE"/>
    <property type="match status" value="1"/>
</dbReference>
<dbReference type="PANTHER" id="PTHR11548">
    <property type="entry name" value="THYMIDYLATE SYNTHASE 1"/>
    <property type="match status" value="1"/>
</dbReference>
<dbReference type="Pfam" id="PF00303">
    <property type="entry name" value="Thymidylat_synt"/>
    <property type="match status" value="1"/>
</dbReference>
<dbReference type="PRINTS" id="PR00108">
    <property type="entry name" value="THYMDSNTHASE"/>
</dbReference>
<dbReference type="SUPFAM" id="SSF55831">
    <property type="entry name" value="Thymidylate synthase/dCMP hydroxymethylase"/>
    <property type="match status" value="1"/>
</dbReference>